<comment type="function">
    <text evidence="1">Channel that opens in response to stretch forces in the membrane lipid bilayer. May participate in the regulation of osmotic pressure changes within the cell.</text>
</comment>
<comment type="subunit">
    <text evidence="1">Homopentamer.</text>
</comment>
<comment type="subcellular location">
    <subcellularLocation>
        <location evidence="1">Cell inner membrane</location>
        <topology evidence="1">Multi-pass membrane protein</topology>
    </subcellularLocation>
</comment>
<comment type="similarity">
    <text evidence="1">Belongs to the MscL family.</text>
</comment>
<sequence length="152" mass="16472">MSKATGFIKEFRDFAVKGNAIDLAVGVIIGAAFGKIVDSLVKDVVMPLVNFILGGSVDFSNKFLVLSMPDGYTGPMTYADLTKAGANVLAWGNFITIIINFVLLAFVIFWMVKAIYSARRKEEAAPEAPAAPPEDVTVLREIRDLLKDKQGS</sequence>
<evidence type="ECO:0000255" key="1">
    <source>
        <dbReference type="HAMAP-Rule" id="MF_00115"/>
    </source>
</evidence>
<organism>
    <name type="scientific">Bordetella bronchiseptica (strain ATCC BAA-588 / NCTC 13252 / RB50)</name>
    <name type="common">Alcaligenes bronchisepticus</name>
    <dbReference type="NCBI Taxonomy" id="257310"/>
    <lineage>
        <taxon>Bacteria</taxon>
        <taxon>Pseudomonadati</taxon>
        <taxon>Pseudomonadota</taxon>
        <taxon>Betaproteobacteria</taxon>
        <taxon>Burkholderiales</taxon>
        <taxon>Alcaligenaceae</taxon>
        <taxon>Bordetella</taxon>
    </lineage>
</organism>
<accession>Q7WDW9</accession>
<keyword id="KW-0997">Cell inner membrane</keyword>
<keyword id="KW-1003">Cell membrane</keyword>
<keyword id="KW-0407">Ion channel</keyword>
<keyword id="KW-0406">Ion transport</keyword>
<keyword id="KW-0472">Membrane</keyword>
<keyword id="KW-0812">Transmembrane</keyword>
<keyword id="KW-1133">Transmembrane helix</keyword>
<keyword id="KW-0813">Transport</keyword>
<proteinExistence type="inferred from homology"/>
<protein>
    <recommendedName>
        <fullName evidence="1">Large-conductance mechanosensitive channel</fullName>
    </recommendedName>
</protein>
<gene>
    <name evidence="1" type="primary">mscL</name>
    <name type="ordered locus">BB4869</name>
</gene>
<name>MSCL_BORBR</name>
<reference key="1">
    <citation type="journal article" date="2003" name="Nat. Genet.">
        <title>Comparative analysis of the genome sequences of Bordetella pertussis, Bordetella parapertussis and Bordetella bronchiseptica.</title>
        <authorList>
            <person name="Parkhill J."/>
            <person name="Sebaihia M."/>
            <person name="Preston A."/>
            <person name="Murphy L.D."/>
            <person name="Thomson N.R."/>
            <person name="Harris D.E."/>
            <person name="Holden M.T.G."/>
            <person name="Churcher C.M."/>
            <person name="Bentley S.D."/>
            <person name="Mungall K.L."/>
            <person name="Cerdeno-Tarraga A.-M."/>
            <person name="Temple L."/>
            <person name="James K.D."/>
            <person name="Harris B."/>
            <person name="Quail M.A."/>
            <person name="Achtman M."/>
            <person name="Atkin R."/>
            <person name="Baker S."/>
            <person name="Basham D."/>
            <person name="Bason N."/>
            <person name="Cherevach I."/>
            <person name="Chillingworth T."/>
            <person name="Collins M."/>
            <person name="Cronin A."/>
            <person name="Davis P."/>
            <person name="Doggett J."/>
            <person name="Feltwell T."/>
            <person name="Goble A."/>
            <person name="Hamlin N."/>
            <person name="Hauser H."/>
            <person name="Holroyd S."/>
            <person name="Jagels K."/>
            <person name="Leather S."/>
            <person name="Moule S."/>
            <person name="Norberczak H."/>
            <person name="O'Neil S."/>
            <person name="Ormond D."/>
            <person name="Price C."/>
            <person name="Rabbinowitsch E."/>
            <person name="Rutter S."/>
            <person name="Sanders M."/>
            <person name="Saunders D."/>
            <person name="Seeger K."/>
            <person name="Sharp S."/>
            <person name="Simmonds M."/>
            <person name="Skelton J."/>
            <person name="Squares R."/>
            <person name="Squares S."/>
            <person name="Stevens K."/>
            <person name="Unwin L."/>
            <person name="Whitehead S."/>
            <person name="Barrell B.G."/>
            <person name="Maskell D.J."/>
        </authorList>
    </citation>
    <scope>NUCLEOTIDE SEQUENCE [LARGE SCALE GENOMIC DNA]</scope>
    <source>
        <strain>ATCC BAA-588 / NCTC 13252 / RB50</strain>
    </source>
</reference>
<feature type="chain" id="PRO_0000237981" description="Large-conductance mechanosensitive channel">
    <location>
        <begin position="1"/>
        <end position="152"/>
    </location>
</feature>
<feature type="transmembrane region" description="Helical" evidence="1">
    <location>
        <begin position="21"/>
        <end position="41"/>
    </location>
</feature>
<feature type="transmembrane region" description="Helical" evidence="1">
    <location>
        <begin position="44"/>
        <end position="64"/>
    </location>
</feature>
<feature type="transmembrane region" description="Helical" evidence="1">
    <location>
        <begin position="92"/>
        <end position="112"/>
    </location>
</feature>
<dbReference type="EMBL" id="BX640451">
    <property type="protein sequence ID" value="CAE35232.1"/>
    <property type="molecule type" value="Genomic_DNA"/>
</dbReference>
<dbReference type="RefSeq" id="WP_003815814.1">
    <property type="nucleotide sequence ID" value="NC_002927.3"/>
</dbReference>
<dbReference type="GeneID" id="56476633"/>
<dbReference type="KEGG" id="bbr:BB4869"/>
<dbReference type="eggNOG" id="COG1970">
    <property type="taxonomic scope" value="Bacteria"/>
</dbReference>
<dbReference type="HOGENOM" id="CLU_095787_0_1_4"/>
<dbReference type="Proteomes" id="UP000001027">
    <property type="component" value="Chromosome"/>
</dbReference>
<dbReference type="GO" id="GO:0005886">
    <property type="term" value="C:plasma membrane"/>
    <property type="evidence" value="ECO:0007669"/>
    <property type="project" value="UniProtKB-SubCell"/>
</dbReference>
<dbReference type="GO" id="GO:0008381">
    <property type="term" value="F:mechanosensitive monoatomic ion channel activity"/>
    <property type="evidence" value="ECO:0007669"/>
    <property type="project" value="UniProtKB-UniRule"/>
</dbReference>
<dbReference type="Gene3D" id="1.10.1200.120">
    <property type="entry name" value="Large-conductance mechanosensitive channel, MscL, domain 1"/>
    <property type="match status" value="1"/>
</dbReference>
<dbReference type="HAMAP" id="MF_00115">
    <property type="entry name" value="MscL"/>
    <property type="match status" value="1"/>
</dbReference>
<dbReference type="InterPro" id="IPR001185">
    <property type="entry name" value="MS_channel"/>
</dbReference>
<dbReference type="InterPro" id="IPR037673">
    <property type="entry name" value="MSC/AndL"/>
</dbReference>
<dbReference type="InterPro" id="IPR036019">
    <property type="entry name" value="MscL_channel"/>
</dbReference>
<dbReference type="NCBIfam" id="TIGR00220">
    <property type="entry name" value="mscL"/>
    <property type="match status" value="1"/>
</dbReference>
<dbReference type="NCBIfam" id="NF001843">
    <property type="entry name" value="PRK00567.1-4"/>
    <property type="match status" value="1"/>
</dbReference>
<dbReference type="NCBIfam" id="NF010557">
    <property type="entry name" value="PRK13952.1"/>
    <property type="match status" value="1"/>
</dbReference>
<dbReference type="PANTHER" id="PTHR30266:SF2">
    <property type="entry name" value="LARGE-CONDUCTANCE MECHANOSENSITIVE CHANNEL"/>
    <property type="match status" value="1"/>
</dbReference>
<dbReference type="PANTHER" id="PTHR30266">
    <property type="entry name" value="MECHANOSENSITIVE CHANNEL MSCL"/>
    <property type="match status" value="1"/>
</dbReference>
<dbReference type="Pfam" id="PF01741">
    <property type="entry name" value="MscL"/>
    <property type="match status" value="1"/>
</dbReference>
<dbReference type="PRINTS" id="PR01264">
    <property type="entry name" value="MECHCHANNEL"/>
</dbReference>
<dbReference type="SUPFAM" id="SSF81330">
    <property type="entry name" value="Gated mechanosensitive channel"/>
    <property type="match status" value="1"/>
</dbReference>